<comment type="function">
    <text evidence="1">Catalyzes the conversion of glucosamine-6-phosphate to glucosamine-1-phosphate.</text>
</comment>
<comment type="catalytic activity">
    <reaction evidence="1">
        <text>alpha-D-glucosamine 1-phosphate = D-glucosamine 6-phosphate</text>
        <dbReference type="Rhea" id="RHEA:23424"/>
        <dbReference type="ChEBI" id="CHEBI:58516"/>
        <dbReference type="ChEBI" id="CHEBI:58725"/>
        <dbReference type="EC" id="5.4.2.10"/>
    </reaction>
</comment>
<comment type="cofactor">
    <cofactor evidence="1">
        <name>Mg(2+)</name>
        <dbReference type="ChEBI" id="CHEBI:18420"/>
    </cofactor>
    <text evidence="1">Binds 1 Mg(2+) ion per subunit.</text>
</comment>
<comment type="PTM">
    <text evidence="1">Activated by phosphorylation.</text>
</comment>
<comment type="similarity">
    <text evidence="1">Belongs to the phosphohexose mutase family.</text>
</comment>
<name>GLMM_CROS8</name>
<evidence type="ECO:0000255" key="1">
    <source>
        <dbReference type="HAMAP-Rule" id="MF_01554"/>
    </source>
</evidence>
<feature type="chain" id="PRO_1000068906" description="Phosphoglucosamine mutase">
    <location>
        <begin position="1"/>
        <end position="445"/>
    </location>
</feature>
<feature type="active site" description="Phosphoserine intermediate" evidence="1">
    <location>
        <position position="102"/>
    </location>
</feature>
<feature type="binding site" description="via phosphate group" evidence="1">
    <location>
        <position position="102"/>
    </location>
    <ligand>
        <name>Mg(2+)</name>
        <dbReference type="ChEBI" id="CHEBI:18420"/>
    </ligand>
</feature>
<feature type="binding site" evidence="1">
    <location>
        <position position="241"/>
    </location>
    <ligand>
        <name>Mg(2+)</name>
        <dbReference type="ChEBI" id="CHEBI:18420"/>
    </ligand>
</feature>
<feature type="binding site" evidence="1">
    <location>
        <position position="243"/>
    </location>
    <ligand>
        <name>Mg(2+)</name>
        <dbReference type="ChEBI" id="CHEBI:18420"/>
    </ligand>
</feature>
<feature type="binding site" evidence="1">
    <location>
        <position position="245"/>
    </location>
    <ligand>
        <name>Mg(2+)</name>
        <dbReference type="ChEBI" id="CHEBI:18420"/>
    </ligand>
</feature>
<feature type="modified residue" description="Phosphoserine" evidence="1">
    <location>
        <position position="102"/>
    </location>
</feature>
<gene>
    <name evidence="1" type="primary">glmM</name>
    <name type="ordered locus">ESA_03567</name>
</gene>
<accession>A7MIM5</accession>
<organism>
    <name type="scientific">Cronobacter sakazakii (strain ATCC BAA-894)</name>
    <name type="common">Enterobacter sakazakii</name>
    <dbReference type="NCBI Taxonomy" id="290339"/>
    <lineage>
        <taxon>Bacteria</taxon>
        <taxon>Pseudomonadati</taxon>
        <taxon>Pseudomonadota</taxon>
        <taxon>Gammaproteobacteria</taxon>
        <taxon>Enterobacterales</taxon>
        <taxon>Enterobacteriaceae</taxon>
        <taxon>Cronobacter</taxon>
    </lineage>
</organism>
<sequence>MSNRKYFGTDGIRGRVGDAPITPDFVLKLGWAAGKVLARHGSRKVIIGKDTRISGYMLESALEAGLAAAGLSALFTGPMPTPAVAYLTRTFRAEAGIVISASHNPFYDNGIKFFSIEGTKLPDEVEEAIEAELEKEISCVDSAELGKASRIVDAAGRYIEFCKGTFPNELSLNGLKIVVDCANGATYHIAPNVLRELGARVVTIGSEPDGLNINEKCGATDVRLLQERVVAEKADLGIAFDGDGDRVIMVDHEGNKVDGDQILYIIAREGLRQGQLRGGAVGTLMSNMGLEVALKQLGIPFARAKVGDRYVLEKMQEKGWRIGAENSGHVILLDKTTTGDGIVAALQVLTAIARNHMSLHDLCSGMKLFPQILVNVRFTPGSGDPLEHDTVKAVTEEVEQALGKRGRVLLRKSGTEPLIRVMVEGENEAQVTEFAHRIADAVKAV</sequence>
<dbReference type="EC" id="5.4.2.10" evidence="1"/>
<dbReference type="EMBL" id="CP000783">
    <property type="protein sequence ID" value="ABU78778.1"/>
    <property type="molecule type" value="Genomic_DNA"/>
</dbReference>
<dbReference type="RefSeq" id="WP_004385063.1">
    <property type="nucleotide sequence ID" value="NC_009778.1"/>
</dbReference>
<dbReference type="SMR" id="A7MIM5"/>
<dbReference type="GeneID" id="56732224"/>
<dbReference type="KEGG" id="esa:ESA_03567"/>
<dbReference type="HOGENOM" id="CLU_016950_7_0_6"/>
<dbReference type="Proteomes" id="UP000000260">
    <property type="component" value="Chromosome"/>
</dbReference>
<dbReference type="GO" id="GO:0005829">
    <property type="term" value="C:cytosol"/>
    <property type="evidence" value="ECO:0007669"/>
    <property type="project" value="TreeGrafter"/>
</dbReference>
<dbReference type="GO" id="GO:0000287">
    <property type="term" value="F:magnesium ion binding"/>
    <property type="evidence" value="ECO:0007669"/>
    <property type="project" value="UniProtKB-UniRule"/>
</dbReference>
<dbReference type="GO" id="GO:0008966">
    <property type="term" value="F:phosphoglucosamine mutase activity"/>
    <property type="evidence" value="ECO:0007669"/>
    <property type="project" value="UniProtKB-UniRule"/>
</dbReference>
<dbReference type="GO" id="GO:0004615">
    <property type="term" value="F:phosphomannomutase activity"/>
    <property type="evidence" value="ECO:0007669"/>
    <property type="project" value="TreeGrafter"/>
</dbReference>
<dbReference type="GO" id="GO:0005975">
    <property type="term" value="P:carbohydrate metabolic process"/>
    <property type="evidence" value="ECO:0007669"/>
    <property type="project" value="InterPro"/>
</dbReference>
<dbReference type="GO" id="GO:0009252">
    <property type="term" value="P:peptidoglycan biosynthetic process"/>
    <property type="evidence" value="ECO:0007669"/>
    <property type="project" value="TreeGrafter"/>
</dbReference>
<dbReference type="GO" id="GO:0006048">
    <property type="term" value="P:UDP-N-acetylglucosamine biosynthetic process"/>
    <property type="evidence" value="ECO:0007669"/>
    <property type="project" value="TreeGrafter"/>
</dbReference>
<dbReference type="CDD" id="cd05802">
    <property type="entry name" value="GlmM"/>
    <property type="match status" value="1"/>
</dbReference>
<dbReference type="FunFam" id="3.30.310.50:FF:000001">
    <property type="entry name" value="Phosphoglucosamine mutase"/>
    <property type="match status" value="1"/>
</dbReference>
<dbReference type="FunFam" id="3.40.120.10:FF:000001">
    <property type="entry name" value="Phosphoglucosamine mutase"/>
    <property type="match status" value="1"/>
</dbReference>
<dbReference type="FunFam" id="3.40.120.10:FF:000002">
    <property type="entry name" value="Phosphoglucosamine mutase"/>
    <property type="match status" value="1"/>
</dbReference>
<dbReference type="Gene3D" id="3.40.120.10">
    <property type="entry name" value="Alpha-D-Glucose-1,6-Bisphosphate, subunit A, domain 3"/>
    <property type="match status" value="3"/>
</dbReference>
<dbReference type="Gene3D" id="3.30.310.50">
    <property type="entry name" value="Alpha-D-phosphohexomutase, C-terminal domain"/>
    <property type="match status" value="1"/>
</dbReference>
<dbReference type="HAMAP" id="MF_01554_B">
    <property type="entry name" value="GlmM_B"/>
    <property type="match status" value="1"/>
</dbReference>
<dbReference type="InterPro" id="IPR005844">
    <property type="entry name" value="A-D-PHexomutase_a/b/a-I"/>
</dbReference>
<dbReference type="InterPro" id="IPR016055">
    <property type="entry name" value="A-D-PHexomutase_a/b/a-I/II/III"/>
</dbReference>
<dbReference type="InterPro" id="IPR005845">
    <property type="entry name" value="A-D-PHexomutase_a/b/a-II"/>
</dbReference>
<dbReference type="InterPro" id="IPR005846">
    <property type="entry name" value="A-D-PHexomutase_a/b/a-III"/>
</dbReference>
<dbReference type="InterPro" id="IPR005843">
    <property type="entry name" value="A-D-PHexomutase_C"/>
</dbReference>
<dbReference type="InterPro" id="IPR036900">
    <property type="entry name" value="A-D-PHexomutase_C_sf"/>
</dbReference>
<dbReference type="InterPro" id="IPR016066">
    <property type="entry name" value="A-D-PHexomutase_CS"/>
</dbReference>
<dbReference type="InterPro" id="IPR005841">
    <property type="entry name" value="Alpha-D-phosphohexomutase_SF"/>
</dbReference>
<dbReference type="InterPro" id="IPR006352">
    <property type="entry name" value="GlmM_bact"/>
</dbReference>
<dbReference type="InterPro" id="IPR050060">
    <property type="entry name" value="Phosphoglucosamine_mutase"/>
</dbReference>
<dbReference type="NCBIfam" id="TIGR01455">
    <property type="entry name" value="glmM"/>
    <property type="match status" value="1"/>
</dbReference>
<dbReference type="NCBIfam" id="NF008139">
    <property type="entry name" value="PRK10887.1"/>
    <property type="match status" value="1"/>
</dbReference>
<dbReference type="PANTHER" id="PTHR42946:SF1">
    <property type="entry name" value="PHOSPHOGLUCOMUTASE (ALPHA-D-GLUCOSE-1,6-BISPHOSPHATE-DEPENDENT)"/>
    <property type="match status" value="1"/>
</dbReference>
<dbReference type="PANTHER" id="PTHR42946">
    <property type="entry name" value="PHOSPHOHEXOSE MUTASE"/>
    <property type="match status" value="1"/>
</dbReference>
<dbReference type="Pfam" id="PF02878">
    <property type="entry name" value="PGM_PMM_I"/>
    <property type="match status" value="1"/>
</dbReference>
<dbReference type="Pfam" id="PF02879">
    <property type="entry name" value="PGM_PMM_II"/>
    <property type="match status" value="1"/>
</dbReference>
<dbReference type="Pfam" id="PF02880">
    <property type="entry name" value="PGM_PMM_III"/>
    <property type="match status" value="1"/>
</dbReference>
<dbReference type="Pfam" id="PF00408">
    <property type="entry name" value="PGM_PMM_IV"/>
    <property type="match status" value="1"/>
</dbReference>
<dbReference type="PRINTS" id="PR00509">
    <property type="entry name" value="PGMPMM"/>
</dbReference>
<dbReference type="SUPFAM" id="SSF55957">
    <property type="entry name" value="Phosphoglucomutase, C-terminal domain"/>
    <property type="match status" value="1"/>
</dbReference>
<dbReference type="SUPFAM" id="SSF53738">
    <property type="entry name" value="Phosphoglucomutase, first 3 domains"/>
    <property type="match status" value="3"/>
</dbReference>
<dbReference type="PROSITE" id="PS00710">
    <property type="entry name" value="PGM_PMM"/>
    <property type="match status" value="1"/>
</dbReference>
<proteinExistence type="inferred from homology"/>
<protein>
    <recommendedName>
        <fullName evidence="1">Phosphoglucosamine mutase</fullName>
        <ecNumber evidence="1">5.4.2.10</ecNumber>
    </recommendedName>
</protein>
<reference key="1">
    <citation type="journal article" date="2010" name="PLoS ONE">
        <title>Genome sequence of Cronobacter sakazakii BAA-894 and comparative genomic hybridization analysis with other Cronobacter species.</title>
        <authorList>
            <person name="Kucerova E."/>
            <person name="Clifton S.W."/>
            <person name="Xia X.Q."/>
            <person name="Long F."/>
            <person name="Porwollik S."/>
            <person name="Fulton L."/>
            <person name="Fronick C."/>
            <person name="Minx P."/>
            <person name="Kyung K."/>
            <person name="Warren W."/>
            <person name="Fulton R."/>
            <person name="Feng D."/>
            <person name="Wollam A."/>
            <person name="Shah N."/>
            <person name="Bhonagiri V."/>
            <person name="Nash W.E."/>
            <person name="Hallsworth-Pepin K."/>
            <person name="Wilson R.K."/>
            <person name="McClelland M."/>
            <person name="Forsythe S.J."/>
        </authorList>
    </citation>
    <scope>NUCLEOTIDE SEQUENCE [LARGE SCALE GENOMIC DNA]</scope>
    <source>
        <strain>ATCC BAA-894</strain>
    </source>
</reference>
<keyword id="KW-0413">Isomerase</keyword>
<keyword id="KW-0460">Magnesium</keyword>
<keyword id="KW-0479">Metal-binding</keyword>
<keyword id="KW-0597">Phosphoprotein</keyword>
<keyword id="KW-1185">Reference proteome</keyword>